<proteinExistence type="inferred from homology"/>
<organism>
    <name type="scientific">Escherichia coli O8 (strain IAI1)</name>
    <dbReference type="NCBI Taxonomy" id="585034"/>
    <lineage>
        <taxon>Bacteria</taxon>
        <taxon>Pseudomonadati</taxon>
        <taxon>Pseudomonadota</taxon>
        <taxon>Gammaproteobacteria</taxon>
        <taxon>Enterobacterales</taxon>
        <taxon>Enterobacteriaceae</taxon>
        <taxon>Escherichia</taxon>
    </lineage>
</organism>
<feature type="chain" id="PRO_1000197003" description="Phosphoheptose isomerase">
    <location>
        <begin position="1"/>
        <end position="192"/>
    </location>
</feature>
<feature type="domain" description="SIS" evidence="1">
    <location>
        <begin position="37"/>
        <end position="192"/>
    </location>
</feature>
<feature type="binding site" evidence="1">
    <location>
        <begin position="52"/>
        <end position="54"/>
    </location>
    <ligand>
        <name>substrate</name>
    </ligand>
</feature>
<feature type="binding site" evidence="1">
    <location>
        <position position="61"/>
    </location>
    <ligand>
        <name>Zn(2+)</name>
        <dbReference type="ChEBI" id="CHEBI:29105"/>
    </ligand>
</feature>
<feature type="binding site" evidence="1">
    <location>
        <position position="65"/>
    </location>
    <ligand>
        <name>substrate</name>
    </ligand>
</feature>
<feature type="binding site" evidence="1">
    <location>
        <position position="65"/>
    </location>
    <ligand>
        <name>Zn(2+)</name>
        <dbReference type="ChEBI" id="CHEBI:29105"/>
    </ligand>
</feature>
<feature type="binding site" evidence="1">
    <location>
        <begin position="93"/>
        <end position="94"/>
    </location>
    <ligand>
        <name>substrate</name>
    </ligand>
</feature>
<feature type="binding site" evidence="1">
    <location>
        <begin position="119"/>
        <end position="121"/>
    </location>
    <ligand>
        <name>substrate</name>
    </ligand>
</feature>
<feature type="binding site" evidence="1">
    <location>
        <position position="124"/>
    </location>
    <ligand>
        <name>substrate</name>
    </ligand>
</feature>
<feature type="binding site" evidence="1">
    <location>
        <position position="172"/>
    </location>
    <ligand>
        <name>substrate</name>
    </ligand>
</feature>
<feature type="binding site" evidence="1">
    <location>
        <position position="172"/>
    </location>
    <ligand>
        <name>Zn(2+)</name>
        <dbReference type="ChEBI" id="CHEBI:29105"/>
    </ligand>
</feature>
<feature type="binding site" evidence="1">
    <location>
        <position position="180"/>
    </location>
    <ligand>
        <name>Zn(2+)</name>
        <dbReference type="ChEBI" id="CHEBI:29105"/>
    </ligand>
</feature>
<keyword id="KW-0119">Carbohydrate metabolism</keyword>
<keyword id="KW-0963">Cytoplasm</keyword>
<keyword id="KW-0413">Isomerase</keyword>
<keyword id="KW-0479">Metal-binding</keyword>
<keyword id="KW-0862">Zinc</keyword>
<dbReference type="EC" id="5.3.1.28" evidence="1"/>
<dbReference type="EMBL" id="CU928160">
    <property type="protein sequence ID" value="CAQ97136.1"/>
    <property type="molecule type" value="Genomic_DNA"/>
</dbReference>
<dbReference type="SMR" id="B7M252"/>
<dbReference type="KEGG" id="ecr:ECIAI1_0262"/>
<dbReference type="HOGENOM" id="CLU_080999_4_0_6"/>
<dbReference type="UniPathway" id="UPA00041">
    <property type="reaction ID" value="UER00436"/>
</dbReference>
<dbReference type="GO" id="GO:0005737">
    <property type="term" value="C:cytoplasm"/>
    <property type="evidence" value="ECO:0007669"/>
    <property type="project" value="UniProtKB-SubCell"/>
</dbReference>
<dbReference type="GO" id="GO:0097367">
    <property type="term" value="F:carbohydrate derivative binding"/>
    <property type="evidence" value="ECO:0007669"/>
    <property type="project" value="InterPro"/>
</dbReference>
<dbReference type="GO" id="GO:0008968">
    <property type="term" value="F:D-sedoheptulose 7-phosphate isomerase activity"/>
    <property type="evidence" value="ECO:0007669"/>
    <property type="project" value="UniProtKB-UniRule"/>
</dbReference>
<dbReference type="GO" id="GO:0008270">
    <property type="term" value="F:zinc ion binding"/>
    <property type="evidence" value="ECO:0007669"/>
    <property type="project" value="UniProtKB-UniRule"/>
</dbReference>
<dbReference type="GO" id="GO:0005975">
    <property type="term" value="P:carbohydrate metabolic process"/>
    <property type="evidence" value="ECO:0007669"/>
    <property type="project" value="UniProtKB-UniRule"/>
</dbReference>
<dbReference type="GO" id="GO:2001061">
    <property type="term" value="P:D-glycero-D-manno-heptose 7-phosphate biosynthetic process"/>
    <property type="evidence" value="ECO:0007669"/>
    <property type="project" value="UniProtKB-UniPathway"/>
</dbReference>
<dbReference type="CDD" id="cd05006">
    <property type="entry name" value="SIS_GmhA"/>
    <property type="match status" value="1"/>
</dbReference>
<dbReference type="FunFam" id="3.40.50.10490:FF:000013">
    <property type="entry name" value="Phosphoheptose isomerase"/>
    <property type="match status" value="1"/>
</dbReference>
<dbReference type="Gene3D" id="3.40.50.10490">
    <property type="entry name" value="Glucose-6-phosphate isomerase like protein, domain 1"/>
    <property type="match status" value="1"/>
</dbReference>
<dbReference type="HAMAP" id="MF_00067">
    <property type="entry name" value="GmhA"/>
    <property type="match status" value="1"/>
</dbReference>
<dbReference type="InterPro" id="IPR035461">
    <property type="entry name" value="GmhA/DiaA"/>
</dbReference>
<dbReference type="InterPro" id="IPR004515">
    <property type="entry name" value="Phosphoheptose_Isoase"/>
</dbReference>
<dbReference type="InterPro" id="IPR001347">
    <property type="entry name" value="SIS_dom"/>
</dbReference>
<dbReference type="InterPro" id="IPR046348">
    <property type="entry name" value="SIS_dom_sf"/>
</dbReference>
<dbReference type="InterPro" id="IPR050099">
    <property type="entry name" value="SIS_GmhA/DiaA_subfam"/>
</dbReference>
<dbReference type="NCBIfam" id="TIGR00441">
    <property type="entry name" value="gmhA"/>
    <property type="match status" value="1"/>
</dbReference>
<dbReference type="NCBIfam" id="NF001628">
    <property type="entry name" value="PRK00414.1"/>
    <property type="match status" value="1"/>
</dbReference>
<dbReference type="PANTHER" id="PTHR30390:SF7">
    <property type="entry name" value="PHOSPHOHEPTOSE ISOMERASE"/>
    <property type="match status" value="1"/>
</dbReference>
<dbReference type="PANTHER" id="PTHR30390">
    <property type="entry name" value="SEDOHEPTULOSE 7-PHOSPHATE ISOMERASE / DNAA INITIATOR-ASSOCIATING FACTOR FOR REPLICATION INITIATION"/>
    <property type="match status" value="1"/>
</dbReference>
<dbReference type="Pfam" id="PF13580">
    <property type="entry name" value="SIS_2"/>
    <property type="match status" value="1"/>
</dbReference>
<dbReference type="SUPFAM" id="SSF53697">
    <property type="entry name" value="SIS domain"/>
    <property type="match status" value="1"/>
</dbReference>
<dbReference type="PROSITE" id="PS51464">
    <property type="entry name" value="SIS"/>
    <property type="match status" value="1"/>
</dbReference>
<reference key="1">
    <citation type="journal article" date="2009" name="PLoS Genet.">
        <title>Organised genome dynamics in the Escherichia coli species results in highly diverse adaptive paths.</title>
        <authorList>
            <person name="Touchon M."/>
            <person name="Hoede C."/>
            <person name="Tenaillon O."/>
            <person name="Barbe V."/>
            <person name="Baeriswyl S."/>
            <person name="Bidet P."/>
            <person name="Bingen E."/>
            <person name="Bonacorsi S."/>
            <person name="Bouchier C."/>
            <person name="Bouvet O."/>
            <person name="Calteau A."/>
            <person name="Chiapello H."/>
            <person name="Clermont O."/>
            <person name="Cruveiller S."/>
            <person name="Danchin A."/>
            <person name="Diard M."/>
            <person name="Dossat C."/>
            <person name="Karoui M.E."/>
            <person name="Frapy E."/>
            <person name="Garry L."/>
            <person name="Ghigo J.M."/>
            <person name="Gilles A.M."/>
            <person name="Johnson J."/>
            <person name="Le Bouguenec C."/>
            <person name="Lescat M."/>
            <person name="Mangenot S."/>
            <person name="Martinez-Jehanne V."/>
            <person name="Matic I."/>
            <person name="Nassif X."/>
            <person name="Oztas S."/>
            <person name="Petit M.A."/>
            <person name="Pichon C."/>
            <person name="Rouy Z."/>
            <person name="Ruf C.S."/>
            <person name="Schneider D."/>
            <person name="Tourret J."/>
            <person name="Vacherie B."/>
            <person name="Vallenet D."/>
            <person name="Medigue C."/>
            <person name="Rocha E.P.C."/>
            <person name="Denamur E."/>
        </authorList>
    </citation>
    <scope>NUCLEOTIDE SEQUENCE [LARGE SCALE GENOMIC DNA]</scope>
    <source>
        <strain>IAI1</strain>
    </source>
</reference>
<accession>B7M252</accession>
<protein>
    <recommendedName>
        <fullName evidence="1">Phosphoheptose isomerase</fullName>
        <ecNumber evidence="1">5.3.1.28</ecNumber>
    </recommendedName>
    <alternativeName>
        <fullName evidence="1">Sedoheptulose 7-phosphate isomerase</fullName>
    </alternativeName>
</protein>
<name>GMHA_ECO8A</name>
<comment type="function">
    <text evidence="1">Catalyzes the isomerization of sedoheptulose 7-phosphate in D-glycero-D-manno-heptose 7-phosphate.</text>
</comment>
<comment type="catalytic activity">
    <reaction evidence="1">
        <text>2 D-sedoheptulose 7-phosphate = D-glycero-alpha-D-manno-heptose 7-phosphate + D-glycero-beta-D-manno-heptose 7-phosphate</text>
        <dbReference type="Rhea" id="RHEA:27489"/>
        <dbReference type="ChEBI" id="CHEBI:57483"/>
        <dbReference type="ChEBI" id="CHEBI:60203"/>
        <dbReference type="ChEBI" id="CHEBI:60204"/>
        <dbReference type="EC" id="5.3.1.28"/>
    </reaction>
</comment>
<comment type="cofactor">
    <cofactor evidence="1">
        <name>Zn(2+)</name>
        <dbReference type="ChEBI" id="CHEBI:29105"/>
    </cofactor>
    <text evidence="1">Binds 1 zinc ion per subunit.</text>
</comment>
<comment type="pathway">
    <text evidence="1">Carbohydrate biosynthesis; D-glycero-D-manno-heptose 7-phosphate biosynthesis; D-glycero-alpha-D-manno-heptose 7-phosphate and D-glycero-beta-D-manno-heptose 7-phosphate from sedoheptulose 7-phosphate: step 1/1.</text>
</comment>
<comment type="subunit">
    <text evidence="1">Homotetramer.</text>
</comment>
<comment type="subcellular location">
    <subcellularLocation>
        <location evidence="1">Cytoplasm</location>
    </subcellularLocation>
</comment>
<comment type="miscellaneous">
    <text evidence="1">The reaction produces a racemic mixture of D-glycero-alpha-D-manno-heptose 7-phosphate and D-glycero-beta-D-manno-heptose 7-phosphate.</text>
</comment>
<comment type="similarity">
    <text evidence="1">Belongs to the SIS family. GmhA subfamily.</text>
</comment>
<evidence type="ECO:0000255" key="1">
    <source>
        <dbReference type="HAMAP-Rule" id="MF_00067"/>
    </source>
</evidence>
<gene>
    <name evidence="1" type="primary">gmhA</name>
    <name type="ordered locus">ECIAI1_0262</name>
</gene>
<sequence length="192" mass="20815">MYQDLIRNELNEAAETLANFLKDDANIHAIQRAAVLLADSFKAGGKVLSCGNGGSHCDAMHFAEELTGRYRENRPGYPAIAISDVSHISCVGNDFGFNDIFSRYVEAVGREGDVLLGISTSGNSANVIKAIAAAREKGMKVITLTGKDGGKMAGTADIEIRVPHFGYADRIQEIHIKVIHILIQLIEKEMVK</sequence>